<proteinExistence type="inferred from homology"/>
<evidence type="ECO:0000255" key="1"/>
<evidence type="ECO:0000255" key="2">
    <source>
        <dbReference type="PROSITE-ProRule" id="PRU00434"/>
    </source>
</evidence>
<evidence type="ECO:0000255" key="3">
    <source>
        <dbReference type="PROSITE-ProRule" id="PRU00498"/>
    </source>
</evidence>
<evidence type="ECO:0000256" key="4">
    <source>
        <dbReference type="SAM" id="MobiDB-lite"/>
    </source>
</evidence>
<evidence type="ECO:0000269" key="5">
    <source>
    </source>
</evidence>
<evidence type="ECO:0000303" key="6">
    <source>
    </source>
</evidence>
<evidence type="ECO:0000305" key="7"/>
<accession>Q4WR59</accession>
<sequence>MNESHEAGKNSSTNVEEREEEVLRLARQFTEQSSYSTAGQTPFAAEAGSALDPNGERFNARAWCKAMLQMHIGDKEAHPLRTLGVAFSNLNVHGFGSDTDYQKSVGNVWLKTLSLARIAFGQKQRKVDILQNLEGLVEAGEMLVVLGPPGSGCSTFLKTIAGETYGFHVDKNSNINFQGIAKQMAHEFRGEAIYTAEVDVHFPKLTVGDTLYFAARARTPRHIPGGVNATQYAGHMRDVIMAMFGISHTKNTIVGNDFIRGVSGGERKRVSIAEACLSNAPLQCWDNSTRGLDSANAIEFCKTLRMQADINGTTACVSLYQAPQAAYDYFDKVLVLYEGREIYFGPTSMAKHYFLQMGFVCPDRQTDADFLTSMTSHLERVVQPGYEDRVPRTPDEFAARWKASPQRAQLMQHIKSYNAKFALDGEYLDKFKQSRRAQQAKAQRVSSPYTLSYVQQVKLCLWRGYQRLKADPSVTISSLFGNTIISLVIASIFYNLKADTSTFFQRGALLFFAVLMNALGCGLEMLTLYAQRGIIEKHSRYALYHPSAEAFSSMIMDLPYKILNAITSNIVLYFMTNLRREPGAFFFFVFTSFILTLTMSMFFRSMASLSRSLVQVLPFSAVLLLGLSMYTGFAIPTGYMLGWARWIAYINPISYGFESLMINEFHNRDFPCMDYVPSGPGYTDVGLNNRVCSTVRSVPGQAFVNGNAYIESAYSYTASHKWRNIGVIFAYMFLLGAVYLVATDFITEKKPKGEILVFPRGHKALKKGKSDEDLEGGGGRSATVEKIGSDGLAMIERQTAIFQWKDVCFDIKIGKENCRILDHVDGWVKPGILTALMGVSGAGKTTLLDVLATRTTMGIISGEMLVDGQPRDESFQRKTGYAQQQDLHLSTATVREALEFSALLRQSAHVPRQEKIDYVTEVIKLLDMTEYADAVIGVPGEGLNVEQRKRLTIGVELAARPQLLLFLDEPTSGLDSQTSWAILDLLDKLKKNGQAILCTIHQPSAMLFQRFDRLLFLQAGGRTVYFGEIGQNSQILIDYFVRNGAPPCPPDANPAEWMLDVIGAAPGSHTSINWFETWRRSPEYARVQEHLAELKHERRHQTNLFRTTSGQKREDKDSYREFAAPFWAQLYQVQVRVFQQIWRSPTYIYSKTALCVLSALFVGFSLFHTPNTIQGLQNQMFGIFMLLTLFGQLIQQIMPHFVAQRALYEVRDRPAKTYSWKAFLIANIVVELPWNSLMSVLMFLCWYYPIGLYRNAEPTDAVHLRGTQMWLMIWTFLLFSSTFAHFMIAAFDAAENAGNLGNLLFLLCLLFCGVLATPDQLPRFWIFMYRVSPFTYLVSGMLSVGISNTNVTCADNEYLRFDPVNGTCGEYMGSYMSNLGGYLADEMATANCSFCPIKETNVFLGRVSSSYSDIWRNFGLMWVFIVFNIFAACSLYWWVRVPRDKKPVAKAE</sequence>
<name>ABCA_ASPFU</name>
<feature type="chain" id="PRO_0000445094" description="ABC multidrug transporter A-1">
    <location>
        <begin position="1"/>
        <end position="1452"/>
    </location>
</feature>
<feature type="transmembrane region" description="Helical" evidence="1">
    <location>
        <begin position="474"/>
        <end position="494"/>
    </location>
</feature>
<feature type="transmembrane region" description="Helical" evidence="1">
    <location>
        <begin position="508"/>
        <end position="528"/>
    </location>
</feature>
<feature type="transmembrane region" description="Helical" evidence="1">
    <location>
        <begin position="554"/>
        <end position="574"/>
    </location>
</feature>
<feature type="transmembrane region" description="Helical" evidence="1">
    <location>
        <begin position="583"/>
        <end position="603"/>
    </location>
</feature>
<feature type="transmembrane region" description="Helical" evidence="1">
    <location>
        <begin position="616"/>
        <end position="636"/>
    </location>
</feature>
<feature type="transmembrane region" description="Helical" evidence="1">
    <location>
        <begin position="725"/>
        <end position="745"/>
    </location>
</feature>
<feature type="transmembrane region" description="Helical" evidence="1">
    <location>
        <begin position="1153"/>
        <end position="1173"/>
    </location>
</feature>
<feature type="transmembrane region" description="Helical" evidence="1">
    <location>
        <begin position="1183"/>
        <end position="1203"/>
    </location>
</feature>
<feature type="transmembrane region" description="Helical" evidence="1">
    <location>
        <begin position="1223"/>
        <end position="1243"/>
    </location>
</feature>
<feature type="transmembrane region" description="Helical" evidence="1">
    <location>
        <begin position="1271"/>
        <end position="1291"/>
    </location>
</feature>
<feature type="transmembrane region" description="Helical" evidence="1">
    <location>
        <begin position="1297"/>
        <end position="1317"/>
    </location>
</feature>
<feature type="transmembrane region" description="Helical" evidence="1">
    <location>
        <begin position="1324"/>
        <end position="1344"/>
    </location>
</feature>
<feature type="transmembrane region" description="Helical" evidence="1">
    <location>
        <begin position="1418"/>
        <end position="1438"/>
    </location>
</feature>
<feature type="domain" description="ABC transporter 1" evidence="2">
    <location>
        <begin position="110"/>
        <end position="363"/>
    </location>
</feature>
<feature type="domain" description="ABC transporter 2" evidence="2">
    <location>
        <begin position="802"/>
        <end position="1044"/>
    </location>
</feature>
<feature type="region of interest" description="Disordered" evidence="4">
    <location>
        <begin position="1"/>
        <end position="20"/>
    </location>
</feature>
<feature type="binding site" evidence="2">
    <location>
        <begin position="838"/>
        <end position="845"/>
    </location>
    <ligand>
        <name>ATP</name>
        <dbReference type="ChEBI" id="CHEBI:30616"/>
    </ligand>
</feature>
<feature type="glycosylation site" description="N-linked (GlcNAc...) asparagine" evidence="3">
    <location>
        <position position="2"/>
    </location>
</feature>
<feature type="glycosylation site" description="N-linked (GlcNAc...) asparagine" evidence="3">
    <location>
        <position position="10"/>
    </location>
</feature>
<feature type="glycosylation site" description="N-linked (GlcNAc...) asparagine" evidence="3">
    <location>
        <position position="228"/>
    </location>
</feature>
<feature type="glycosylation site" description="N-linked (GlcNAc...) asparagine" evidence="3">
    <location>
        <position position="287"/>
    </location>
</feature>
<feature type="glycosylation site" description="N-linked (GlcNAc...) asparagine" evidence="3">
    <location>
        <position position="311"/>
    </location>
</feature>
<feature type="glycosylation site" description="N-linked (GlcNAc...) asparagine" evidence="3">
    <location>
        <position position="1350"/>
    </location>
</feature>
<feature type="glycosylation site" description="N-linked (GlcNAc...) asparagine" evidence="3">
    <location>
        <position position="1365"/>
    </location>
</feature>
<feature type="glycosylation site" description="N-linked (GlcNAc...) asparagine" evidence="3">
    <location>
        <position position="1391"/>
    </location>
</feature>
<reference key="1">
    <citation type="journal article" date="2005" name="Nature">
        <title>Genomic sequence of the pathogenic and allergenic filamentous fungus Aspergillus fumigatus.</title>
        <authorList>
            <person name="Nierman W.C."/>
            <person name="Pain A."/>
            <person name="Anderson M.J."/>
            <person name="Wortman J.R."/>
            <person name="Kim H.S."/>
            <person name="Arroyo J."/>
            <person name="Berriman M."/>
            <person name="Abe K."/>
            <person name="Archer D.B."/>
            <person name="Bermejo C."/>
            <person name="Bennett J.W."/>
            <person name="Bowyer P."/>
            <person name="Chen D."/>
            <person name="Collins M."/>
            <person name="Coulsen R."/>
            <person name="Davies R."/>
            <person name="Dyer P.S."/>
            <person name="Farman M.L."/>
            <person name="Fedorova N."/>
            <person name="Fedorova N.D."/>
            <person name="Feldblyum T.V."/>
            <person name="Fischer R."/>
            <person name="Fosker N."/>
            <person name="Fraser A."/>
            <person name="Garcia J.L."/>
            <person name="Garcia M.J."/>
            <person name="Goble A."/>
            <person name="Goldman G.H."/>
            <person name="Gomi K."/>
            <person name="Griffith-Jones S."/>
            <person name="Gwilliam R."/>
            <person name="Haas B.J."/>
            <person name="Haas H."/>
            <person name="Harris D.E."/>
            <person name="Horiuchi H."/>
            <person name="Huang J."/>
            <person name="Humphray S."/>
            <person name="Jimenez J."/>
            <person name="Keller N."/>
            <person name="Khouri H."/>
            <person name="Kitamoto K."/>
            <person name="Kobayashi T."/>
            <person name="Konzack S."/>
            <person name="Kulkarni R."/>
            <person name="Kumagai T."/>
            <person name="Lafton A."/>
            <person name="Latge J.-P."/>
            <person name="Li W."/>
            <person name="Lord A."/>
            <person name="Lu C."/>
            <person name="Majoros W.H."/>
            <person name="May G.S."/>
            <person name="Miller B.L."/>
            <person name="Mohamoud Y."/>
            <person name="Molina M."/>
            <person name="Monod M."/>
            <person name="Mouyna I."/>
            <person name="Mulligan S."/>
            <person name="Murphy L.D."/>
            <person name="O'Neil S."/>
            <person name="Paulsen I."/>
            <person name="Penalva M.A."/>
            <person name="Pertea M."/>
            <person name="Price C."/>
            <person name="Pritchard B.L."/>
            <person name="Quail M.A."/>
            <person name="Rabbinowitsch E."/>
            <person name="Rawlins N."/>
            <person name="Rajandream M.A."/>
            <person name="Reichard U."/>
            <person name="Renauld H."/>
            <person name="Robson G.D."/>
            <person name="Rodriguez de Cordoba S."/>
            <person name="Rodriguez-Pena J.M."/>
            <person name="Ronning C.M."/>
            <person name="Rutter S."/>
            <person name="Salzberg S.L."/>
            <person name="Sanchez M."/>
            <person name="Sanchez-Ferrero J.C."/>
            <person name="Saunders D."/>
            <person name="Seeger K."/>
            <person name="Squares R."/>
            <person name="Squares S."/>
            <person name="Takeuchi M."/>
            <person name="Tekaia F."/>
            <person name="Turner G."/>
            <person name="Vazquez de Aldana C.R."/>
            <person name="Weidman J."/>
            <person name="White O."/>
            <person name="Woodward J.R."/>
            <person name="Yu J.-H."/>
            <person name="Fraser C.M."/>
            <person name="Galagan J.E."/>
            <person name="Asai K."/>
            <person name="Machida M."/>
            <person name="Hall N."/>
            <person name="Barrell B.G."/>
            <person name="Denning D.W."/>
        </authorList>
    </citation>
    <scope>NUCLEOTIDE SEQUENCE [LARGE SCALE GENOMIC DNA]</scope>
    <source>
        <strain>ATCC MYA-4609 / CBS 101355 / FGSC A1100 / Af293</strain>
    </source>
</reference>
<reference key="2">
    <citation type="journal article" date="2002" name="Curr. Genet.">
        <title>A novel method used to delete a new Aspergillus fumigatus ABC transporter-encoding gene.</title>
        <authorList>
            <person name="Langfelder K."/>
            <person name="Gattung S."/>
            <person name="Brakhage A.A."/>
        </authorList>
    </citation>
    <scope>DISRUPTION PHENOTYPE</scope>
    <scope>FUNCTION</scope>
</reference>
<dbReference type="EMBL" id="AAHF01000004">
    <property type="protein sequence ID" value="EAL91073.1"/>
    <property type="molecule type" value="Genomic_DNA"/>
</dbReference>
<dbReference type="RefSeq" id="XP_753111.1">
    <property type="nucleotide sequence ID" value="XM_748018.1"/>
</dbReference>
<dbReference type="SMR" id="Q4WR59"/>
<dbReference type="FunCoup" id="Q4WR59">
    <property type="interactions" value="361"/>
</dbReference>
<dbReference type="STRING" id="330879.Q4WR59"/>
<dbReference type="CARD" id="ARO:3003942">
    <property type="molecule name" value="abcA"/>
    <property type="mechanism identifier" value="ARO:0010000"/>
    <property type="mechanism name" value="antibiotic efflux"/>
</dbReference>
<dbReference type="GlyCosmos" id="Q4WR59">
    <property type="glycosylation" value="8 sites, No reported glycans"/>
</dbReference>
<dbReference type="EnsemblFungi" id="EAL91073">
    <property type="protein sequence ID" value="EAL91073"/>
    <property type="gene ID" value="AFUA_1G17440"/>
</dbReference>
<dbReference type="GeneID" id="3510143"/>
<dbReference type="KEGG" id="afm:AFUA_1G17440"/>
<dbReference type="eggNOG" id="KOG0065">
    <property type="taxonomic scope" value="Eukaryota"/>
</dbReference>
<dbReference type="HOGENOM" id="CLU_000604_35_0_1"/>
<dbReference type="InParanoid" id="Q4WR59"/>
<dbReference type="OMA" id="FNIFAAC"/>
<dbReference type="OrthoDB" id="245989at2759"/>
<dbReference type="Proteomes" id="UP000002530">
    <property type="component" value="Chromosome 1"/>
</dbReference>
<dbReference type="GO" id="GO:0016020">
    <property type="term" value="C:membrane"/>
    <property type="evidence" value="ECO:0007669"/>
    <property type="project" value="UniProtKB-SubCell"/>
</dbReference>
<dbReference type="GO" id="GO:0140359">
    <property type="term" value="F:ABC-type transporter activity"/>
    <property type="evidence" value="ECO:0007669"/>
    <property type="project" value="InterPro"/>
</dbReference>
<dbReference type="GO" id="GO:0005524">
    <property type="term" value="F:ATP binding"/>
    <property type="evidence" value="ECO:0007669"/>
    <property type="project" value="UniProtKB-KW"/>
</dbReference>
<dbReference type="GO" id="GO:0016887">
    <property type="term" value="F:ATP hydrolysis activity"/>
    <property type="evidence" value="ECO:0007669"/>
    <property type="project" value="InterPro"/>
</dbReference>
<dbReference type="CDD" id="cd03233">
    <property type="entry name" value="ABCG_PDR_domain1"/>
    <property type="match status" value="1"/>
</dbReference>
<dbReference type="CDD" id="cd03232">
    <property type="entry name" value="ABCG_PDR_domain2"/>
    <property type="match status" value="1"/>
</dbReference>
<dbReference type="FunFam" id="3.40.50.300:FF:000881">
    <property type="entry name" value="ABC multidrug transporter A-1"/>
    <property type="match status" value="1"/>
</dbReference>
<dbReference type="FunFam" id="3.40.50.300:FF:000054">
    <property type="entry name" value="ABC multidrug transporter atrF"/>
    <property type="match status" value="1"/>
</dbReference>
<dbReference type="Gene3D" id="3.40.50.300">
    <property type="entry name" value="P-loop containing nucleotide triphosphate hydrolases"/>
    <property type="match status" value="2"/>
</dbReference>
<dbReference type="InterPro" id="IPR003593">
    <property type="entry name" value="AAA+_ATPase"/>
</dbReference>
<dbReference type="InterPro" id="IPR013525">
    <property type="entry name" value="ABC2_TM"/>
</dbReference>
<dbReference type="InterPro" id="IPR029481">
    <property type="entry name" value="ABC_trans_N"/>
</dbReference>
<dbReference type="InterPro" id="IPR003439">
    <property type="entry name" value="ABC_transporter-like_ATP-bd"/>
</dbReference>
<dbReference type="InterPro" id="IPR034001">
    <property type="entry name" value="ABCG_PDR_1"/>
</dbReference>
<dbReference type="InterPro" id="IPR034003">
    <property type="entry name" value="ABCG_PDR_2"/>
</dbReference>
<dbReference type="InterPro" id="IPR027417">
    <property type="entry name" value="P-loop_NTPase"/>
</dbReference>
<dbReference type="InterPro" id="IPR010929">
    <property type="entry name" value="PDR_CDR_ABC"/>
</dbReference>
<dbReference type="PANTHER" id="PTHR19241">
    <property type="entry name" value="ATP-BINDING CASSETTE TRANSPORTER"/>
    <property type="match status" value="1"/>
</dbReference>
<dbReference type="Pfam" id="PF01061">
    <property type="entry name" value="ABC2_membrane"/>
    <property type="match status" value="2"/>
</dbReference>
<dbReference type="Pfam" id="PF00005">
    <property type="entry name" value="ABC_tran"/>
    <property type="match status" value="2"/>
</dbReference>
<dbReference type="Pfam" id="PF14510">
    <property type="entry name" value="ABC_trans_N"/>
    <property type="match status" value="1"/>
</dbReference>
<dbReference type="Pfam" id="PF06422">
    <property type="entry name" value="PDR_CDR"/>
    <property type="match status" value="1"/>
</dbReference>
<dbReference type="SMART" id="SM00382">
    <property type="entry name" value="AAA"/>
    <property type="match status" value="2"/>
</dbReference>
<dbReference type="SUPFAM" id="SSF52540">
    <property type="entry name" value="P-loop containing nucleoside triphosphate hydrolases"/>
    <property type="match status" value="2"/>
</dbReference>
<dbReference type="PROSITE" id="PS50893">
    <property type="entry name" value="ABC_TRANSPORTER_2"/>
    <property type="match status" value="2"/>
</dbReference>
<gene>
    <name evidence="6" type="primary">abcA</name>
    <name type="ORF">AFUA_1G17440</name>
</gene>
<protein>
    <recommendedName>
        <fullName evidence="7">ABC multidrug transporter A-1</fullName>
    </recommendedName>
</protein>
<comment type="function">
    <text evidence="5">ABC transporter that seems not to be involved in the efflux of toxic substances, at least not the classical compounds such as itraconazole, amphotericin B, voriconazole, posaconazole, ravuconazole, or echinocandins.</text>
</comment>
<comment type="subcellular location">
    <subcellularLocation>
        <location evidence="1">Membrane</location>
        <topology evidence="1">Multi-pass membrane protein</topology>
    </subcellularLocation>
</comment>
<comment type="disruption phenotype">
    <text evidence="5">Does not lead to growth defects or changes in developmental patterns and does not affect sensitivity to itraconazole, amphotericin B, voriconazole, posaconazole, ravuconazole, or echinocandins.</text>
</comment>
<comment type="similarity">
    <text evidence="7">Belongs to the ABC transporter superfamily. ABCG family. PDR (TC 3.A.1.205) subfamily.</text>
</comment>
<organism>
    <name type="scientific">Aspergillus fumigatus (strain ATCC MYA-4609 / CBS 101355 / FGSC A1100 / Af293)</name>
    <name type="common">Neosartorya fumigata</name>
    <dbReference type="NCBI Taxonomy" id="330879"/>
    <lineage>
        <taxon>Eukaryota</taxon>
        <taxon>Fungi</taxon>
        <taxon>Dikarya</taxon>
        <taxon>Ascomycota</taxon>
        <taxon>Pezizomycotina</taxon>
        <taxon>Eurotiomycetes</taxon>
        <taxon>Eurotiomycetidae</taxon>
        <taxon>Eurotiales</taxon>
        <taxon>Aspergillaceae</taxon>
        <taxon>Aspergillus</taxon>
        <taxon>Aspergillus subgen. Fumigati</taxon>
    </lineage>
</organism>
<keyword id="KW-0067">ATP-binding</keyword>
<keyword id="KW-0325">Glycoprotein</keyword>
<keyword id="KW-0472">Membrane</keyword>
<keyword id="KW-0547">Nucleotide-binding</keyword>
<keyword id="KW-1185">Reference proteome</keyword>
<keyword id="KW-0677">Repeat</keyword>
<keyword id="KW-0812">Transmembrane</keyword>
<keyword id="KW-1133">Transmembrane helix</keyword>
<keyword id="KW-0813">Transport</keyword>